<reference key="1">
    <citation type="journal article" date="1990" name="J. Biol. Chem.">
        <title>Human gastric (H+ + K+)-ATPase gene. Similarity to (Na+ + K+)-ATPase genes in exon/intron organization but difference in control region.</title>
        <authorList>
            <person name="Maeda M."/>
            <person name="Oshiman K."/>
            <person name="Tamura S."/>
            <person name="Futai M."/>
        </authorList>
    </citation>
    <scope>NUCLEOTIDE SEQUENCE [GENOMIC DNA]</scope>
    <scope>VARIANT ALA-265</scope>
</reference>
<reference key="2">
    <citation type="journal article" date="1990" name="DNA Cell Biol.">
        <title>Structure of the human gastric H,K-ATPase gene and comparison of the 5'-flanking sequences of the human and rat genes.</title>
        <authorList>
            <person name="Newman P.R."/>
            <person name="Greeb J."/>
            <person name="Keeton T.P."/>
            <person name="Reyes A.A."/>
            <person name="Shull G.E."/>
        </authorList>
    </citation>
    <scope>NUCLEOTIDE SEQUENCE [GENOMIC DNA]</scope>
</reference>
<reference key="3">
    <citation type="journal article" date="2004" name="Nature">
        <title>The DNA sequence and biology of human chromosome 19.</title>
        <authorList>
            <person name="Grimwood J."/>
            <person name="Gordon L.A."/>
            <person name="Olsen A.S."/>
            <person name="Terry A."/>
            <person name="Schmutz J."/>
            <person name="Lamerdin J.E."/>
            <person name="Hellsten U."/>
            <person name="Goodstein D."/>
            <person name="Couronne O."/>
            <person name="Tran-Gyamfi M."/>
            <person name="Aerts A."/>
            <person name="Altherr M."/>
            <person name="Ashworth L."/>
            <person name="Bajorek E."/>
            <person name="Black S."/>
            <person name="Branscomb E."/>
            <person name="Caenepeel S."/>
            <person name="Carrano A.V."/>
            <person name="Caoile C."/>
            <person name="Chan Y.M."/>
            <person name="Christensen M."/>
            <person name="Cleland C.A."/>
            <person name="Copeland A."/>
            <person name="Dalin E."/>
            <person name="Dehal P."/>
            <person name="Denys M."/>
            <person name="Detter J.C."/>
            <person name="Escobar J."/>
            <person name="Flowers D."/>
            <person name="Fotopulos D."/>
            <person name="Garcia C."/>
            <person name="Georgescu A.M."/>
            <person name="Glavina T."/>
            <person name="Gomez M."/>
            <person name="Gonzales E."/>
            <person name="Groza M."/>
            <person name="Hammon N."/>
            <person name="Hawkins T."/>
            <person name="Haydu L."/>
            <person name="Ho I."/>
            <person name="Huang W."/>
            <person name="Israni S."/>
            <person name="Jett J."/>
            <person name="Kadner K."/>
            <person name="Kimball H."/>
            <person name="Kobayashi A."/>
            <person name="Larionov V."/>
            <person name="Leem S.-H."/>
            <person name="Lopez F."/>
            <person name="Lou Y."/>
            <person name="Lowry S."/>
            <person name="Malfatti S."/>
            <person name="Martinez D."/>
            <person name="McCready P.M."/>
            <person name="Medina C."/>
            <person name="Morgan J."/>
            <person name="Nelson K."/>
            <person name="Nolan M."/>
            <person name="Ovcharenko I."/>
            <person name="Pitluck S."/>
            <person name="Pollard M."/>
            <person name="Popkie A.P."/>
            <person name="Predki P."/>
            <person name="Quan G."/>
            <person name="Ramirez L."/>
            <person name="Rash S."/>
            <person name="Retterer J."/>
            <person name="Rodriguez A."/>
            <person name="Rogers S."/>
            <person name="Salamov A."/>
            <person name="Salazar A."/>
            <person name="She X."/>
            <person name="Smith D."/>
            <person name="Slezak T."/>
            <person name="Solovyev V."/>
            <person name="Thayer N."/>
            <person name="Tice H."/>
            <person name="Tsai M."/>
            <person name="Ustaszewska A."/>
            <person name="Vo N."/>
            <person name="Wagner M."/>
            <person name="Wheeler J."/>
            <person name="Wu K."/>
            <person name="Xie G."/>
            <person name="Yang J."/>
            <person name="Dubchak I."/>
            <person name="Furey T.S."/>
            <person name="DeJong P."/>
            <person name="Dickson M."/>
            <person name="Gordon D."/>
            <person name="Eichler E.E."/>
            <person name="Pennacchio L.A."/>
            <person name="Richardson P."/>
            <person name="Stubbs L."/>
            <person name="Rokhsar D.S."/>
            <person name="Myers R.M."/>
            <person name="Rubin E.M."/>
            <person name="Lucas S.M."/>
        </authorList>
    </citation>
    <scope>NUCLEOTIDE SEQUENCE [LARGE SCALE GENOMIC DNA]</scope>
</reference>
<reference key="4">
    <citation type="journal article" date="1987" name="FEBS Lett.">
        <title>The family of human Na+,K+-ATPase genes. No less than five genes and/or pseudogenes related to the alpha-subunit.</title>
        <authorList>
            <person name="Sverdlov E.D."/>
            <person name="Monastyrskaya G.S."/>
            <person name="Broude N.E."/>
            <person name="Ushkaryov Y.A."/>
            <person name="Allikmets R.L."/>
            <person name="Melkov A.M."/>
            <person name="Smirnov Y.V."/>
            <person name="Malyshev I.V."/>
            <person name="Dulubova I.E."/>
            <person name="Petrukhin K.E."/>
            <person name="Gryshin A.V."/>
            <person name="Kiyatkin N.I."/>
            <person name="Kostina M.B."/>
            <person name="Sverdlov V.E."/>
            <person name="Modyanov N.N."/>
            <person name="Ovchinnikov Y.A."/>
        </authorList>
    </citation>
    <scope>NUCLEOTIDE SEQUENCE [GENOMIC DNA] OF 355-401</scope>
    <source>
        <tissue>Brain</tissue>
        <tissue>Placenta</tissue>
    </source>
</reference>
<reference key="5">
    <citation type="journal article" date="2013" name="FEBS Lett.">
        <title>Modulation of H(+),K(+)-ATPase activity by the molecular chaperone ERp57 highly expressed in gastric parietal cells.</title>
        <authorList>
            <person name="Fujii T."/>
            <person name="Awaka S.Y."/>
            <person name="Takahashi Y."/>
            <person name="Fujita K."/>
            <person name="Tsuji H."/>
            <person name="Shimizu T."/>
            <person name="Gomi T."/>
            <person name="Tsukada K."/>
            <person name="Sakai H."/>
        </authorList>
    </citation>
    <scope>TISSUE SPECIFICITY</scope>
    <scope>SUBCELLULAR LOCATION</scope>
</reference>
<keyword id="KW-0067">ATP-binding</keyword>
<keyword id="KW-1003">Cell membrane</keyword>
<keyword id="KW-0375">Hydrogen ion transport</keyword>
<keyword id="KW-0406">Ion transport</keyword>
<keyword id="KW-0460">Magnesium</keyword>
<keyword id="KW-0472">Membrane</keyword>
<keyword id="KW-0479">Metal-binding</keyword>
<keyword id="KW-0547">Nucleotide-binding</keyword>
<keyword id="KW-0597">Phosphoprotein</keyword>
<keyword id="KW-0630">Potassium</keyword>
<keyword id="KW-0633">Potassium transport</keyword>
<keyword id="KW-1267">Proteomics identification</keyword>
<keyword id="KW-1185">Reference proteome</keyword>
<keyword id="KW-1278">Translocase</keyword>
<keyword id="KW-0812">Transmembrane</keyword>
<keyword id="KW-1133">Transmembrane helix</keyword>
<keyword id="KW-0813">Transport</keyword>
<gene>
    <name evidence="12" type="primary">ATP4A</name>
</gene>
<accession>P20648</accession>
<accession>O00738</accession>
<name>ATP4A_HUMAN</name>
<proteinExistence type="evidence at protein level"/>
<sequence>MGKAENYELYSVELGPGPGGDMAAKMSKKKKAGGGGGKRKEKLENMKKEMEINDHQLSVAELEQKYQTSATKGLSASLAAELLLRDGPNALRPPRGTPEYVKFARQLAGGLQCLMWVAAAICLIAFAIQASEGDLTTDDNLYLAIALIAVVVVTGCFGYYQEFKSTNIIASFKNLVPQQATVIRDGDKFQINADQLVVGDLVEMKGGDRVPADIRILAAQGCKVDNSSLTGESEPQTRSPECTHESPLETRNIAFFSTMCLEGTVQGLVVNTGDRTIIGRIASLASGVENEKTPIAIEIEHFVDIIAGLAILFGATFFIVAMCIGYTFLRAMVFFMAIVVAYVPEGLLATVTVCLSLTAKRLASKNCVVKNLEAVETLGSTSVICSDKTGTLTQNRMTVSHLWFDNHIHTADTTEDQSGQTFDQSSETWRALCRVLTLCNRAAFKSGQDAVPVPKRIVIGDASETALLKFSELTLGNAMGYRDRFPKVCEIPFNSTNKFQLSIHTLEDPRDPRHLLVMKGAPERVLERCSSILIKGQELPLDEQWREAFQTAYLSLGGLGERVLGFCQLYLNEKDYPPGYAFDVEAMNFPSSGLCFAGLVSMIDPPRATVPDAVLKCRTAGIRVIMVTGDHPITAKAIAASVGIISEGSETVEDIAARLRVPVDQVNRKDARACVINGMQLKDMDPSELVEALRTHPEMVFARTSPQQKLVIVESCQRLGAIVAVTGDGVNDSPALKKADIGVAMGIAGSDAAKNAADMILLDDNFASIVTGVEQGRLIFDNLKKSIAYTLTKNIPELTPYLIYITVSVPLPLGCITILFIELCTDIFPSVSLAYEKAESDIMHLRPRNPKRDRLVNEPLAAYSYFQIGAIQSFAGFTDYFTAMAQEGWFPLLCVGLRAQWEDHHLQDLQDSYGQEWTFGQRLYQQYTCYTVFFISIEVCQIADVLIRKTRRLSAFQQGFFRNKILVIAIVFQVCIGCFLCYCPGMPNIFNFMPIRFQWWLVPLPYGILIFVYDEIRKLGVRCCPGSWWDQELYY</sequence>
<dbReference type="EC" id="7.2.2.19" evidence="2"/>
<dbReference type="EMBL" id="J05451">
    <property type="protein sequence ID" value="AAA51010.1"/>
    <property type="molecule type" value="Genomic_DNA"/>
</dbReference>
<dbReference type="EMBL" id="M63962">
    <property type="protein sequence ID" value="AAA35988.1"/>
    <property type="molecule type" value="Genomic_DNA"/>
</dbReference>
<dbReference type="EMBL" id="AD000090">
    <property type="protein sequence ID" value="AAB50172.1"/>
    <property type="molecule type" value="Genomic_DNA"/>
</dbReference>
<dbReference type="EMBL" id="AC002389">
    <property type="protein sequence ID" value="AAB64182.1"/>
    <property type="molecule type" value="Genomic_DNA"/>
</dbReference>
<dbReference type="EMBL" id="M27575">
    <property type="protein sequence ID" value="AAA35577.1"/>
    <property type="molecule type" value="Genomic_DNA"/>
</dbReference>
<dbReference type="CCDS" id="CCDS12467.1"/>
<dbReference type="PIR" id="A36558">
    <property type="entry name" value="A35292"/>
</dbReference>
<dbReference type="PIR" id="C27397">
    <property type="entry name" value="C27397"/>
</dbReference>
<dbReference type="RefSeq" id="NP_000695.2">
    <property type="nucleotide sequence ID" value="NM_000704.3"/>
</dbReference>
<dbReference type="SMR" id="P20648"/>
<dbReference type="BioGRID" id="106985">
    <property type="interactions" value="104"/>
</dbReference>
<dbReference type="ComplexPortal" id="CPX-2160">
    <property type="entry name" value="Hydrogen:potassium-exchanging ATPase complex"/>
</dbReference>
<dbReference type="CORUM" id="P20648"/>
<dbReference type="FunCoup" id="P20648">
    <property type="interactions" value="277"/>
</dbReference>
<dbReference type="IntAct" id="P20648">
    <property type="interactions" value="16"/>
</dbReference>
<dbReference type="MINT" id="P20648"/>
<dbReference type="STRING" id="9606.ENSP00000262623"/>
<dbReference type="BindingDB" id="P20648"/>
<dbReference type="ChEMBL" id="CHEMBL2095173"/>
<dbReference type="DrugBank" id="DB05351">
    <property type="generic name" value="Dexlansoprazole"/>
</dbReference>
<dbReference type="DrugBank" id="DB00736">
    <property type="generic name" value="Esomeprazole"/>
</dbReference>
<dbReference type="DrugBank" id="DB00448">
    <property type="generic name" value="Lansoprazole"/>
</dbReference>
<dbReference type="DrugBank" id="DB00338">
    <property type="generic name" value="Omeprazole"/>
</dbReference>
<dbReference type="DrugBank" id="DB00213">
    <property type="generic name" value="Pantoprazole"/>
</dbReference>
<dbReference type="DrugBank" id="DB13620">
    <property type="generic name" value="Potassium gluconate"/>
</dbReference>
<dbReference type="DrugBank" id="DB01129">
    <property type="generic name" value="Rabeprazole"/>
</dbReference>
<dbReference type="DrugBank" id="DB17856">
    <property type="generic name" value="Soraprazan"/>
</dbReference>
<dbReference type="DrugBank" id="DB11739">
    <property type="generic name" value="Vonoprazan"/>
</dbReference>
<dbReference type="DrugCentral" id="P20648"/>
<dbReference type="GuidetoPHARMACOLOGY" id="849"/>
<dbReference type="TCDB" id="3.A.3.1.2">
    <property type="family name" value="the p-type atpase (p-atpase) superfamily"/>
</dbReference>
<dbReference type="iPTMnet" id="P20648"/>
<dbReference type="PhosphoSitePlus" id="P20648"/>
<dbReference type="SwissPalm" id="P20648"/>
<dbReference type="BioMuta" id="ATP4A"/>
<dbReference type="DMDM" id="148877240"/>
<dbReference type="jPOST" id="P20648"/>
<dbReference type="MassIVE" id="P20648"/>
<dbReference type="PaxDb" id="9606-ENSP00000262623"/>
<dbReference type="PeptideAtlas" id="P20648"/>
<dbReference type="ProteomicsDB" id="53770"/>
<dbReference type="Antibodypedia" id="48214">
    <property type="antibodies" value="49 antibodies from 13 providers"/>
</dbReference>
<dbReference type="DNASU" id="495"/>
<dbReference type="Ensembl" id="ENST00000262623.4">
    <property type="protein sequence ID" value="ENSP00000262623.2"/>
    <property type="gene ID" value="ENSG00000105675.9"/>
</dbReference>
<dbReference type="GeneID" id="495"/>
<dbReference type="KEGG" id="hsa:495"/>
<dbReference type="MANE-Select" id="ENST00000262623.4">
    <property type="protein sequence ID" value="ENSP00000262623.2"/>
    <property type="RefSeq nucleotide sequence ID" value="NM_000704.3"/>
    <property type="RefSeq protein sequence ID" value="NP_000695.2"/>
</dbReference>
<dbReference type="UCSC" id="uc002oal.2">
    <property type="organism name" value="human"/>
</dbReference>
<dbReference type="AGR" id="HGNC:819"/>
<dbReference type="CTD" id="495"/>
<dbReference type="DisGeNET" id="495"/>
<dbReference type="GeneCards" id="ATP4A"/>
<dbReference type="HGNC" id="HGNC:819">
    <property type="gene designation" value="ATP4A"/>
</dbReference>
<dbReference type="HPA" id="ENSG00000105675">
    <property type="expression patterns" value="Tissue enriched (stomach)"/>
</dbReference>
<dbReference type="MalaCards" id="ATP4A"/>
<dbReference type="MIM" id="137216">
    <property type="type" value="gene"/>
</dbReference>
<dbReference type="neXtProt" id="NX_P20648"/>
<dbReference type="OpenTargets" id="ENSG00000105675"/>
<dbReference type="Orphanet" id="464756">
    <property type="disease" value="Familial gastric type 1 neuroendocrine tumor"/>
</dbReference>
<dbReference type="PharmGKB" id="PA25113"/>
<dbReference type="VEuPathDB" id="HostDB:ENSG00000105675"/>
<dbReference type="eggNOG" id="KOG0203">
    <property type="taxonomic scope" value="Eukaryota"/>
</dbReference>
<dbReference type="GeneTree" id="ENSGT00940000160297"/>
<dbReference type="HOGENOM" id="CLU_002360_4_1_1"/>
<dbReference type="InParanoid" id="P20648"/>
<dbReference type="OMA" id="PVQKDCD"/>
<dbReference type="OrthoDB" id="158672at2759"/>
<dbReference type="PAN-GO" id="P20648">
    <property type="GO annotations" value="8 GO annotations based on evolutionary models"/>
</dbReference>
<dbReference type="PhylomeDB" id="P20648"/>
<dbReference type="TreeFam" id="TF312838"/>
<dbReference type="BioCyc" id="MetaCyc:HS02790-MONOMER"/>
<dbReference type="BRENDA" id="7.2.2.19">
    <property type="organism ID" value="2681"/>
</dbReference>
<dbReference type="PathwayCommons" id="P20648"/>
<dbReference type="Reactome" id="R-HSA-936837">
    <property type="pathway name" value="Ion transport by P-type ATPases"/>
</dbReference>
<dbReference type="SignaLink" id="P20648"/>
<dbReference type="BioGRID-ORCS" id="495">
    <property type="hits" value="11 hits in 1163 CRISPR screens"/>
</dbReference>
<dbReference type="CD-CODE" id="FB4E32DD">
    <property type="entry name" value="Presynaptic clusters and postsynaptic densities"/>
</dbReference>
<dbReference type="GenomeRNAi" id="495"/>
<dbReference type="Pharos" id="P20648">
    <property type="development level" value="Tclin"/>
</dbReference>
<dbReference type="PRO" id="PR:P20648"/>
<dbReference type="Proteomes" id="UP000005640">
    <property type="component" value="Chromosome 19"/>
</dbReference>
<dbReference type="RNAct" id="P20648">
    <property type="molecule type" value="protein"/>
</dbReference>
<dbReference type="Bgee" id="ENSG00000105675">
    <property type="expression patterns" value="Expressed in cardia of stomach and 106 other cell types or tissues"/>
</dbReference>
<dbReference type="ExpressionAtlas" id="P20648">
    <property type="expression patterns" value="baseline and differential"/>
</dbReference>
<dbReference type="GO" id="GO:0016324">
    <property type="term" value="C:apical plasma membrane"/>
    <property type="evidence" value="ECO:0007669"/>
    <property type="project" value="UniProtKB-SubCell"/>
</dbReference>
<dbReference type="GO" id="GO:0005615">
    <property type="term" value="C:extracellular space"/>
    <property type="evidence" value="ECO:0007005"/>
    <property type="project" value="UniProtKB"/>
</dbReference>
<dbReference type="GO" id="GO:0005886">
    <property type="term" value="C:plasma membrane"/>
    <property type="evidence" value="ECO:0000318"/>
    <property type="project" value="GO_Central"/>
</dbReference>
<dbReference type="GO" id="GO:0005889">
    <property type="term" value="C:potassium:proton exchanging ATPase complex"/>
    <property type="evidence" value="ECO:0000266"/>
    <property type="project" value="ComplexPortal"/>
</dbReference>
<dbReference type="GO" id="GO:0005524">
    <property type="term" value="F:ATP binding"/>
    <property type="evidence" value="ECO:0007669"/>
    <property type="project" value="UniProtKB-KW"/>
</dbReference>
<dbReference type="GO" id="GO:0016887">
    <property type="term" value="F:ATP hydrolysis activity"/>
    <property type="evidence" value="ECO:0007669"/>
    <property type="project" value="InterPro"/>
</dbReference>
<dbReference type="GO" id="GO:0000287">
    <property type="term" value="F:magnesium ion binding"/>
    <property type="evidence" value="ECO:0000250"/>
    <property type="project" value="UniProtKB"/>
</dbReference>
<dbReference type="GO" id="GO:0008900">
    <property type="term" value="F:P-type potassium:proton transporter activity"/>
    <property type="evidence" value="ECO:0000318"/>
    <property type="project" value="GO_Central"/>
</dbReference>
<dbReference type="GO" id="GO:0005391">
    <property type="term" value="F:P-type sodium:potassium-exchanging transporter activity"/>
    <property type="evidence" value="ECO:0000318"/>
    <property type="project" value="GO_Central"/>
</dbReference>
<dbReference type="GO" id="GO:0030955">
    <property type="term" value="F:potassium ion binding"/>
    <property type="evidence" value="ECO:0000250"/>
    <property type="project" value="UniProtKB"/>
</dbReference>
<dbReference type="GO" id="GO:0030007">
    <property type="term" value="P:intracellular potassium ion homeostasis"/>
    <property type="evidence" value="ECO:0000318"/>
    <property type="project" value="GO_Central"/>
</dbReference>
<dbReference type="GO" id="GO:0006883">
    <property type="term" value="P:intracellular sodium ion homeostasis"/>
    <property type="evidence" value="ECO:0000318"/>
    <property type="project" value="GO_Central"/>
</dbReference>
<dbReference type="GO" id="GO:0034220">
    <property type="term" value="P:monoatomic ion transmembrane transport"/>
    <property type="evidence" value="ECO:0000304"/>
    <property type="project" value="Reactome"/>
</dbReference>
<dbReference type="GO" id="GO:0045851">
    <property type="term" value="P:pH reduction"/>
    <property type="evidence" value="ECO:0007669"/>
    <property type="project" value="Ensembl"/>
</dbReference>
<dbReference type="GO" id="GO:1990573">
    <property type="term" value="P:potassium ion import across plasma membrane"/>
    <property type="evidence" value="ECO:0000318"/>
    <property type="project" value="GO_Central"/>
</dbReference>
<dbReference type="GO" id="GO:0071805">
    <property type="term" value="P:potassium ion transmembrane transport"/>
    <property type="evidence" value="ECO:0000266"/>
    <property type="project" value="ComplexPortal"/>
</dbReference>
<dbReference type="GO" id="GO:1902600">
    <property type="term" value="P:proton transmembrane transport"/>
    <property type="evidence" value="ECO:0000318"/>
    <property type="project" value="GO_Central"/>
</dbReference>
<dbReference type="GO" id="GO:0010155">
    <property type="term" value="P:regulation of proton transport"/>
    <property type="evidence" value="ECO:0007669"/>
    <property type="project" value="Ensembl"/>
</dbReference>
<dbReference type="GO" id="GO:0009410">
    <property type="term" value="P:response to xenobiotic stimulus"/>
    <property type="evidence" value="ECO:0007669"/>
    <property type="project" value="Ensembl"/>
</dbReference>
<dbReference type="GO" id="GO:0036376">
    <property type="term" value="P:sodium ion export across plasma membrane"/>
    <property type="evidence" value="ECO:0000318"/>
    <property type="project" value="GO_Central"/>
</dbReference>
<dbReference type="CDD" id="cd02608">
    <property type="entry name" value="P-type_ATPase_Na-K_like"/>
    <property type="match status" value="1"/>
</dbReference>
<dbReference type="FunFam" id="3.40.50.1000:FF:000001">
    <property type="entry name" value="Phospholipid-transporting ATPase IC"/>
    <property type="match status" value="1"/>
</dbReference>
<dbReference type="FunFam" id="1.20.1110.10:FF:000079">
    <property type="entry name" value="Sodium/potassium-transporting ATPase subunit alpha"/>
    <property type="match status" value="1"/>
</dbReference>
<dbReference type="FunFam" id="2.70.150.10:FF:000003">
    <property type="entry name" value="Sodium/potassium-transporting ATPase subunit alpha"/>
    <property type="match status" value="1"/>
</dbReference>
<dbReference type="FunFam" id="3.40.1110.10:FF:000001">
    <property type="entry name" value="Sodium/potassium-transporting ATPase subunit alpha"/>
    <property type="match status" value="1"/>
</dbReference>
<dbReference type="FunFam" id="3.40.50.1000:FF:000004">
    <property type="entry name" value="Sodium/potassium-transporting ATPase subunit alpha"/>
    <property type="match status" value="1"/>
</dbReference>
<dbReference type="FunFam" id="1.20.1110.10:FF:000095">
    <property type="entry name" value="Sodium/potassium-transporting ATPase subunit alpha-1"/>
    <property type="match status" value="1"/>
</dbReference>
<dbReference type="Gene3D" id="3.40.1110.10">
    <property type="entry name" value="Calcium-transporting ATPase, cytoplasmic domain N"/>
    <property type="match status" value="1"/>
</dbReference>
<dbReference type="Gene3D" id="2.70.150.10">
    <property type="entry name" value="Calcium-transporting ATPase, cytoplasmic transduction domain A"/>
    <property type="match status" value="1"/>
</dbReference>
<dbReference type="Gene3D" id="1.20.1110.10">
    <property type="entry name" value="Calcium-transporting ATPase, transmembrane domain"/>
    <property type="match status" value="1"/>
</dbReference>
<dbReference type="Gene3D" id="3.40.50.1000">
    <property type="entry name" value="HAD superfamily/HAD-like"/>
    <property type="match status" value="1"/>
</dbReference>
<dbReference type="InterPro" id="IPR006068">
    <property type="entry name" value="ATPase_P-typ_cation-transptr_C"/>
</dbReference>
<dbReference type="InterPro" id="IPR004014">
    <property type="entry name" value="ATPase_P-typ_cation-transptr_N"/>
</dbReference>
<dbReference type="InterPro" id="IPR023299">
    <property type="entry name" value="ATPase_P-typ_cyto_dom_N"/>
</dbReference>
<dbReference type="InterPro" id="IPR015127">
    <property type="entry name" value="ATPase_P-typ_H/K-transp_N"/>
</dbReference>
<dbReference type="InterPro" id="IPR018303">
    <property type="entry name" value="ATPase_P-typ_P_site"/>
</dbReference>
<dbReference type="InterPro" id="IPR023298">
    <property type="entry name" value="ATPase_P-typ_TM_dom_sf"/>
</dbReference>
<dbReference type="InterPro" id="IPR008250">
    <property type="entry name" value="ATPase_P-typ_transduc_dom_A_sf"/>
</dbReference>
<dbReference type="InterPro" id="IPR050510">
    <property type="entry name" value="Cation_transp_ATPase_P-type"/>
</dbReference>
<dbReference type="InterPro" id="IPR036412">
    <property type="entry name" value="HAD-like_sf"/>
</dbReference>
<dbReference type="InterPro" id="IPR023214">
    <property type="entry name" value="HAD_sf"/>
</dbReference>
<dbReference type="InterPro" id="IPR005775">
    <property type="entry name" value="P-type_ATPase_IIC"/>
</dbReference>
<dbReference type="InterPro" id="IPR001757">
    <property type="entry name" value="P_typ_ATPase"/>
</dbReference>
<dbReference type="InterPro" id="IPR044492">
    <property type="entry name" value="P_typ_ATPase_HD_dom"/>
</dbReference>
<dbReference type="NCBIfam" id="TIGR01106">
    <property type="entry name" value="ATPase-IIC_X-K"/>
    <property type="match status" value="1"/>
</dbReference>
<dbReference type="NCBIfam" id="TIGR01494">
    <property type="entry name" value="ATPase_P-type"/>
    <property type="match status" value="2"/>
</dbReference>
<dbReference type="PANTHER" id="PTHR43294:SF10">
    <property type="entry name" value="POTASSIUM-TRANSPORTING ATPASE ALPHA CHAIN 1"/>
    <property type="match status" value="1"/>
</dbReference>
<dbReference type="PANTHER" id="PTHR43294">
    <property type="entry name" value="SODIUM/POTASSIUM-TRANSPORTING ATPASE SUBUNIT ALPHA"/>
    <property type="match status" value="1"/>
</dbReference>
<dbReference type="Pfam" id="PF13246">
    <property type="entry name" value="Cation_ATPase"/>
    <property type="match status" value="1"/>
</dbReference>
<dbReference type="Pfam" id="PF00689">
    <property type="entry name" value="Cation_ATPase_C"/>
    <property type="match status" value="1"/>
</dbReference>
<dbReference type="Pfam" id="PF00690">
    <property type="entry name" value="Cation_ATPase_N"/>
    <property type="match status" value="1"/>
</dbReference>
<dbReference type="Pfam" id="PF00122">
    <property type="entry name" value="E1-E2_ATPase"/>
    <property type="match status" value="1"/>
</dbReference>
<dbReference type="Pfam" id="PF09040">
    <property type="entry name" value="H-K_ATPase_N"/>
    <property type="match status" value="1"/>
</dbReference>
<dbReference type="Pfam" id="PF00702">
    <property type="entry name" value="Hydrolase"/>
    <property type="match status" value="1"/>
</dbReference>
<dbReference type="PRINTS" id="PR00119">
    <property type="entry name" value="CATATPASE"/>
</dbReference>
<dbReference type="PRINTS" id="PR00121">
    <property type="entry name" value="NAKATPASE"/>
</dbReference>
<dbReference type="SFLD" id="SFLDS00003">
    <property type="entry name" value="Haloacid_Dehalogenase"/>
    <property type="match status" value="1"/>
</dbReference>
<dbReference type="SFLD" id="SFLDF00027">
    <property type="entry name" value="p-type_atpase"/>
    <property type="match status" value="1"/>
</dbReference>
<dbReference type="SMART" id="SM00831">
    <property type="entry name" value="Cation_ATPase_N"/>
    <property type="match status" value="1"/>
</dbReference>
<dbReference type="SUPFAM" id="SSF81653">
    <property type="entry name" value="Calcium ATPase, transduction domain A"/>
    <property type="match status" value="1"/>
</dbReference>
<dbReference type="SUPFAM" id="SSF81665">
    <property type="entry name" value="Calcium ATPase, transmembrane domain M"/>
    <property type="match status" value="1"/>
</dbReference>
<dbReference type="SUPFAM" id="SSF56784">
    <property type="entry name" value="HAD-like"/>
    <property type="match status" value="1"/>
</dbReference>
<dbReference type="SUPFAM" id="SSF81660">
    <property type="entry name" value="Metal cation-transporting ATPase, ATP-binding domain N"/>
    <property type="match status" value="1"/>
</dbReference>
<dbReference type="PROSITE" id="PS00154">
    <property type="entry name" value="ATPASE_E1_E2"/>
    <property type="match status" value="1"/>
</dbReference>
<comment type="function">
    <text evidence="2 3 5">The catalytic subunit of the gastric H(+)/K(+) ATPase pump which transports H(+) ions in exchange for K(+) ions across the apical membrane of parietal cells. Uses ATP as an energy source to pump H(+) ions to the gastric lumen while transporting K(+) ion from the lumen into the cell (By similarity). Remarkably generates a million-fold proton gradient across the gastric parietal cell membrane, acidifying the gastric juice down to pH 1 (By similarity). Within a transport cycle, the transfer of a H(+) ion across the membrane is coupled to ATP hydrolysis and is associated with a transient phosphorylation that shifts the pump conformation from inward-facing (E1) to outward-facing state (E2). The release of the H(+) ion in the stomach lumen is followed by binding of K(+) ion converting the pump conformation back to the E1 state (By similarity).</text>
</comment>
<comment type="catalytic activity">
    <reaction evidence="2">
        <text>K(+)(out) + ATP + H2O + H(+)(in) = K(+)(in) + ADP + phosphate + 2 H(+)(out)</text>
        <dbReference type="Rhea" id="RHEA:22044"/>
        <dbReference type="ChEBI" id="CHEBI:15377"/>
        <dbReference type="ChEBI" id="CHEBI:15378"/>
        <dbReference type="ChEBI" id="CHEBI:29103"/>
        <dbReference type="ChEBI" id="CHEBI:30616"/>
        <dbReference type="ChEBI" id="CHEBI:43474"/>
        <dbReference type="ChEBI" id="CHEBI:456216"/>
        <dbReference type="EC" id="7.2.2.19"/>
    </reaction>
    <physiologicalReaction direction="left-to-right" evidence="2">
        <dbReference type="Rhea" id="RHEA:22045"/>
    </physiologicalReaction>
</comment>
<comment type="subunit">
    <text evidence="3">The gastric H(+)/K(+) ATPase pump is composed of the catalytic alpha subunit ATP4A and the regulatory beta subunit ATP4B. Interacts (via the P-domain) with ATP4B (via N-terminus); this interaction stabilizes the lumenal-open E2 conformation state and prevents the reverse reaction of the transport cycle.</text>
</comment>
<comment type="subcellular location">
    <subcellularLocation>
        <location evidence="10">Apical cell membrane</location>
        <topology evidence="7">Multi-pass membrane protein</topology>
    </subcellularLocation>
    <text evidence="10">Localized in the apical canalicular membrane of parietal cells (PubMed:24188822).</text>
</comment>
<comment type="tissue specificity">
    <text evidence="10">Expressed in gastric parietal cells (at protein level).</text>
</comment>
<comment type="similarity">
    <text evidence="11">Belongs to the cation transport ATPase (P-type) (TC 3.A.3) family. Type IIC subfamily.</text>
</comment>
<evidence type="ECO:0000250" key="1"/>
<evidence type="ECO:0000250" key="2">
    <source>
        <dbReference type="UniProtKB" id="P09626"/>
    </source>
</evidence>
<evidence type="ECO:0000250" key="3">
    <source>
        <dbReference type="UniProtKB" id="P19156"/>
    </source>
</evidence>
<evidence type="ECO:0000250" key="4">
    <source>
        <dbReference type="UniProtKB" id="P50993"/>
    </source>
</evidence>
<evidence type="ECO:0000250" key="5">
    <source>
        <dbReference type="UniProtKB" id="Q64436"/>
    </source>
</evidence>
<evidence type="ECO:0000250" key="6">
    <source>
        <dbReference type="UniProtKB" id="Q6PIE5"/>
    </source>
</evidence>
<evidence type="ECO:0000255" key="7"/>
<evidence type="ECO:0000256" key="8">
    <source>
        <dbReference type="SAM" id="MobiDB-lite"/>
    </source>
</evidence>
<evidence type="ECO:0000269" key="9">
    <source>
    </source>
</evidence>
<evidence type="ECO:0000269" key="10">
    <source>
    </source>
</evidence>
<evidence type="ECO:0000305" key="11"/>
<evidence type="ECO:0000312" key="12">
    <source>
        <dbReference type="HGNC" id="HGNC:819"/>
    </source>
</evidence>
<feature type="chain" id="PRO_0000046253" description="Potassium-transporting ATPase alpha chain 1">
    <location>
        <begin position="1"/>
        <end position="1035"/>
    </location>
</feature>
<feature type="topological domain" description="Cytoplasmic" evidence="7">
    <location>
        <begin position="1"/>
        <end position="98"/>
    </location>
</feature>
<feature type="transmembrane region" description="Helical" evidence="7">
    <location>
        <begin position="99"/>
        <end position="119"/>
    </location>
</feature>
<feature type="topological domain" description="Lumenal" evidence="7">
    <location>
        <begin position="120"/>
        <end position="142"/>
    </location>
</feature>
<feature type="transmembrane region" description="Helical" evidence="7">
    <location>
        <begin position="143"/>
        <end position="163"/>
    </location>
</feature>
<feature type="topological domain" description="Cytoplasmic" evidence="7">
    <location>
        <begin position="164"/>
        <end position="299"/>
    </location>
</feature>
<feature type="transmembrane region" description="Helical" evidence="7">
    <location>
        <begin position="300"/>
        <end position="319"/>
    </location>
</feature>
<feature type="topological domain" description="Lumenal" evidence="7">
    <location>
        <begin position="320"/>
        <end position="331"/>
    </location>
</feature>
<feature type="transmembrane region" description="Helical" evidence="7">
    <location>
        <begin position="332"/>
        <end position="349"/>
    </location>
</feature>
<feature type="topological domain" description="Cytoplasmic" evidence="7">
    <location>
        <begin position="350"/>
        <end position="783"/>
    </location>
</feature>
<feature type="transmembrane region" description="Helical" evidence="7">
    <location>
        <begin position="784"/>
        <end position="803"/>
    </location>
</feature>
<feature type="topological domain" description="Lumenal" evidence="7">
    <location>
        <begin position="804"/>
        <end position="813"/>
    </location>
</feature>
<feature type="transmembrane region" description="Helical" evidence="7">
    <location>
        <begin position="814"/>
        <end position="834"/>
    </location>
</feature>
<feature type="topological domain" description="Cytoplasmic" evidence="7">
    <location>
        <begin position="835"/>
        <end position="854"/>
    </location>
</feature>
<feature type="transmembrane region" description="Helical" evidence="7">
    <location>
        <begin position="855"/>
        <end position="877"/>
    </location>
</feature>
<feature type="topological domain" description="Lumenal" evidence="7">
    <location>
        <begin position="878"/>
        <end position="929"/>
    </location>
</feature>
<feature type="transmembrane region" description="Helical" evidence="7">
    <location>
        <begin position="930"/>
        <end position="949"/>
    </location>
</feature>
<feature type="topological domain" description="Cytoplasmic" evidence="7">
    <location>
        <begin position="950"/>
        <end position="963"/>
    </location>
</feature>
<feature type="transmembrane region" description="Helical" evidence="7">
    <location>
        <begin position="964"/>
        <end position="982"/>
    </location>
</feature>
<feature type="topological domain" description="Lumenal" evidence="7">
    <location>
        <begin position="983"/>
        <end position="997"/>
    </location>
</feature>
<feature type="transmembrane region" description="Helical" evidence="7">
    <location>
        <begin position="998"/>
        <end position="1018"/>
    </location>
</feature>
<feature type="topological domain" description="Cytoplasmic" evidence="7">
    <location>
        <begin position="1019"/>
        <end position="1035"/>
    </location>
</feature>
<feature type="region of interest" description="Disordered" evidence="8">
    <location>
        <begin position="1"/>
        <end position="41"/>
    </location>
</feature>
<feature type="compositionally biased region" description="Basic residues" evidence="8">
    <location>
        <begin position="26"/>
        <end position="40"/>
    </location>
</feature>
<feature type="active site" description="4-aspartylphosphate intermediate" evidence="3">
    <location>
        <position position="387"/>
    </location>
</feature>
<feature type="binding site" evidence="3">
    <location>
        <position position="340"/>
    </location>
    <ligand>
        <name>K(+)</name>
        <dbReference type="ChEBI" id="CHEBI:29103"/>
    </ligand>
</feature>
<feature type="binding site" evidence="3">
    <location>
        <position position="341"/>
    </location>
    <ligand>
        <name>K(+)</name>
        <dbReference type="ChEBI" id="CHEBI:29103"/>
    </ligand>
</feature>
<feature type="binding site" evidence="3">
    <location>
        <position position="343"/>
    </location>
    <ligand>
        <name>K(+)</name>
        <dbReference type="ChEBI" id="CHEBI:29103"/>
    </ligand>
</feature>
<feature type="binding site" evidence="3">
    <location>
        <position position="345"/>
    </location>
    <ligand>
        <name>K(+)</name>
        <dbReference type="ChEBI" id="CHEBI:29103"/>
    </ligand>
</feature>
<feature type="binding site" evidence="3">
    <location>
        <position position="387"/>
    </location>
    <ligand>
        <name>Mg(2+)</name>
        <dbReference type="ChEBI" id="CHEBI:18420"/>
    </ligand>
</feature>
<feature type="binding site" evidence="3">
    <location>
        <position position="389"/>
    </location>
    <ligand>
        <name>Mg(2+)</name>
        <dbReference type="ChEBI" id="CHEBI:18420"/>
    </ligand>
</feature>
<feature type="binding site" evidence="3">
    <location>
        <position position="728"/>
    </location>
    <ligand>
        <name>Mg(2+)</name>
        <dbReference type="ChEBI" id="CHEBI:18420"/>
    </ligand>
</feature>
<feature type="binding site" evidence="1">
    <location>
        <position position="732"/>
    </location>
    <ligand>
        <name>Mg(2+)</name>
        <dbReference type="ChEBI" id="CHEBI:18420"/>
    </ligand>
</feature>
<feature type="binding site" evidence="3">
    <location>
        <position position="797"/>
    </location>
    <ligand>
        <name>K(+)</name>
        <dbReference type="ChEBI" id="CHEBI:29103"/>
    </ligand>
</feature>
<feature type="binding site" evidence="3">
    <location>
        <position position="822"/>
    </location>
    <ligand>
        <name>K(+)</name>
        <dbReference type="ChEBI" id="CHEBI:29103"/>
    </ligand>
</feature>
<feature type="modified residue" description="Phosphotyrosine" evidence="3">
    <location>
        <position position="7"/>
    </location>
</feature>
<feature type="modified residue" description="Phosphotyrosine" evidence="3">
    <location>
        <position position="10"/>
    </location>
</feature>
<feature type="modified residue" description="Phosphoserine" evidence="3">
    <location>
        <position position="27"/>
    </location>
</feature>
<feature type="modified residue" description="Phosphoserine" evidence="6">
    <location>
        <position position="463"/>
    </location>
</feature>
<feature type="modified residue" description="Phosphoserine" evidence="4">
    <location>
        <position position="601"/>
    </location>
</feature>
<feature type="modified residue" description="Phosphoserine" evidence="2">
    <location>
        <position position="840"/>
    </location>
</feature>
<feature type="modified residue" description="Phosphoserine; by PKA" evidence="1">
    <location>
        <position position="954"/>
    </location>
</feature>
<feature type="sequence variant" id="VAR_019428" description="In dbSNP:rs2733743." evidence="9">
    <original>V</original>
    <variation>A</variation>
    <location>
        <position position="265"/>
    </location>
</feature>
<protein>
    <recommendedName>
        <fullName>Potassium-transporting ATPase alpha chain 1</fullName>
        <ecNumber evidence="2">7.2.2.19</ecNumber>
    </recommendedName>
    <alternativeName>
        <fullName>Gastric H(+)/K(+) ATPase subunit alpha</fullName>
    </alternativeName>
    <alternativeName>
        <fullName>Proton pump</fullName>
    </alternativeName>
</protein>
<organism>
    <name type="scientific">Homo sapiens</name>
    <name type="common">Human</name>
    <dbReference type="NCBI Taxonomy" id="9606"/>
    <lineage>
        <taxon>Eukaryota</taxon>
        <taxon>Metazoa</taxon>
        <taxon>Chordata</taxon>
        <taxon>Craniata</taxon>
        <taxon>Vertebrata</taxon>
        <taxon>Euteleostomi</taxon>
        <taxon>Mammalia</taxon>
        <taxon>Eutheria</taxon>
        <taxon>Euarchontoglires</taxon>
        <taxon>Primates</taxon>
        <taxon>Haplorrhini</taxon>
        <taxon>Catarrhini</taxon>
        <taxon>Hominidae</taxon>
        <taxon>Homo</taxon>
    </lineage>
</organism>